<evidence type="ECO:0000269" key="1">
    <source>
    </source>
</evidence>
<evidence type="ECO:0000305" key="2"/>
<sequence>QQDYGTGWFDF</sequence>
<feature type="peptide" id="PRO_0000043883" description="Caerulein-3.2/3.2Y4">
    <location>
        <begin position="1"/>
        <end position="11"/>
    </location>
</feature>
<feature type="modified residue" description="Pyrrolidone carboxylic acid" evidence="1">
    <location>
        <position position="1"/>
    </location>
</feature>
<feature type="modified residue" description="Sulfotyrosine" evidence="1">
    <location>
        <position position="4"/>
    </location>
</feature>
<feature type="modified residue" description="Phenylalanine amide" evidence="1">
    <location>
        <position position="11"/>
    </location>
</feature>
<keyword id="KW-0027">Amidation</keyword>
<keyword id="KW-0878">Amphibian defense peptide</keyword>
<keyword id="KW-0903">Direct protein sequencing</keyword>
<keyword id="KW-0382">Hypotensive agent</keyword>
<keyword id="KW-0873">Pyrrolidone carboxylic acid</keyword>
<keyword id="KW-0964">Secreted</keyword>
<keyword id="KW-0765">Sulfation</keyword>
<proteinExistence type="evidence at protein level"/>
<accession>P82090</accession>
<dbReference type="GO" id="GO:0005576">
    <property type="term" value="C:extracellular region"/>
    <property type="evidence" value="ECO:0007669"/>
    <property type="project" value="UniProtKB-SubCell"/>
</dbReference>
<dbReference type="GO" id="GO:0006952">
    <property type="term" value="P:defense response"/>
    <property type="evidence" value="ECO:0007669"/>
    <property type="project" value="UniProtKB-KW"/>
</dbReference>
<dbReference type="GO" id="GO:0008217">
    <property type="term" value="P:regulation of blood pressure"/>
    <property type="evidence" value="ECO:0007669"/>
    <property type="project" value="UniProtKB-KW"/>
</dbReference>
<name>CAE32_RANCI</name>
<reference key="1">
    <citation type="journal article" date="1999" name="Rapid Commun. Mass Spectrom.">
        <title>Caerulein-like peptides from the skin glands of the Australian blue mountains tree frog Litoria citropa. Part 1. Sequence determination using electrospray mass spectrometry.</title>
        <authorList>
            <person name="Wabnitz P.A."/>
            <person name="Bowie J.H."/>
            <person name="Tyler M.J."/>
        </authorList>
    </citation>
    <scope>PROTEIN SEQUENCE</scope>
    <scope>PYROGLUTAMATE FORMATION AT GLN-1</scope>
    <scope>SULFATION AT TYR-4</scope>
    <scope>AMIDATION AT PHE-11</scope>
    <scope>MASS SPECTROMETRY</scope>
    <source>
        <tissue>Skin secretion</tissue>
    </source>
</reference>
<protein>
    <recommendedName>
        <fullName>Caerulein-3.2/3.2Y4</fullName>
    </recommendedName>
</protein>
<organism>
    <name type="scientific">Ranoidea citropa</name>
    <name type="common">Australian Blue Mountains tree frog</name>
    <name type="synonym">Litoria citropa</name>
    <dbReference type="NCBI Taxonomy" id="94770"/>
    <lineage>
        <taxon>Eukaryota</taxon>
        <taxon>Metazoa</taxon>
        <taxon>Chordata</taxon>
        <taxon>Craniata</taxon>
        <taxon>Vertebrata</taxon>
        <taxon>Euteleostomi</taxon>
        <taxon>Amphibia</taxon>
        <taxon>Batrachia</taxon>
        <taxon>Anura</taxon>
        <taxon>Neobatrachia</taxon>
        <taxon>Hyloidea</taxon>
        <taxon>Hylidae</taxon>
        <taxon>Pelodryadinae</taxon>
        <taxon>Ranoidea</taxon>
    </lineage>
</organism>
<comment type="function">
    <text evidence="2">Hypotensive neuropeptide.</text>
</comment>
<comment type="subcellular location">
    <subcellularLocation>
        <location>Secreted</location>
    </subcellularLocation>
</comment>
<comment type="tissue specificity">
    <text>Expressed by the skin dorsal glands.</text>
</comment>
<comment type="PTM">
    <text evidence="1">Isoform 3.2Y4 differs from isoform 3.2 in not being sulfated.</text>
</comment>
<comment type="mass spectrometry"/>
<comment type="similarity">
    <text evidence="2">Belongs to the gastrin/cholecystokinin family.</text>
</comment>